<evidence type="ECO:0000255" key="1">
    <source>
        <dbReference type="HAMAP-Rule" id="MF_00318"/>
    </source>
</evidence>
<reference key="1">
    <citation type="journal article" date="2007" name="PLoS ONE">
        <title>A glimpse of streptococcal toxic shock syndrome from comparative genomics of S. suis 2 Chinese isolates.</title>
        <authorList>
            <person name="Chen C."/>
            <person name="Tang J."/>
            <person name="Dong W."/>
            <person name="Wang C."/>
            <person name="Feng Y."/>
            <person name="Wang J."/>
            <person name="Zheng F."/>
            <person name="Pan X."/>
            <person name="Liu D."/>
            <person name="Li M."/>
            <person name="Song Y."/>
            <person name="Zhu X."/>
            <person name="Sun H."/>
            <person name="Feng T."/>
            <person name="Guo Z."/>
            <person name="Ju A."/>
            <person name="Ge J."/>
            <person name="Dong Y."/>
            <person name="Sun W."/>
            <person name="Jiang Y."/>
            <person name="Wang J."/>
            <person name="Yan J."/>
            <person name="Yang H."/>
            <person name="Wang X."/>
            <person name="Gao G.F."/>
            <person name="Yang R."/>
            <person name="Wang J."/>
            <person name="Yu J."/>
        </authorList>
    </citation>
    <scope>NUCLEOTIDE SEQUENCE [LARGE SCALE GENOMIC DNA]</scope>
    <source>
        <strain>98HAH33</strain>
    </source>
</reference>
<name>ENO_STRS2</name>
<accession>A4W2T1</accession>
<gene>
    <name evidence="1" type="primary">eno</name>
    <name type="ordered locus">SSU98_1513</name>
</gene>
<feature type="chain" id="PRO_1000019254" description="Enolase">
    <location>
        <begin position="1"/>
        <end position="435"/>
    </location>
</feature>
<feature type="active site" description="Proton donor" evidence="1">
    <location>
        <position position="205"/>
    </location>
</feature>
<feature type="active site" description="Proton acceptor" evidence="1">
    <location>
        <position position="344"/>
    </location>
</feature>
<feature type="binding site" evidence="1">
    <location>
        <position position="163"/>
    </location>
    <ligand>
        <name>(2R)-2-phosphoglycerate</name>
        <dbReference type="ChEBI" id="CHEBI:58289"/>
    </ligand>
</feature>
<feature type="binding site" evidence="1">
    <location>
        <position position="243"/>
    </location>
    <ligand>
        <name>Mg(2+)</name>
        <dbReference type="ChEBI" id="CHEBI:18420"/>
    </ligand>
</feature>
<feature type="binding site" evidence="1">
    <location>
        <position position="292"/>
    </location>
    <ligand>
        <name>Mg(2+)</name>
        <dbReference type="ChEBI" id="CHEBI:18420"/>
    </ligand>
</feature>
<feature type="binding site" evidence="1">
    <location>
        <position position="319"/>
    </location>
    <ligand>
        <name>Mg(2+)</name>
        <dbReference type="ChEBI" id="CHEBI:18420"/>
    </ligand>
</feature>
<feature type="binding site" evidence="1">
    <location>
        <position position="344"/>
    </location>
    <ligand>
        <name>(2R)-2-phosphoglycerate</name>
        <dbReference type="ChEBI" id="CHEBI:58289"/>
    </ligand>
</feature>
<feature type="binding site" evidence="1">
    <location>
        <position position="373"/>
    </location>
    <ligand>
        <name>(2R)-2-phosphoglycerate</name>
        <dbReference type="ChEBI" id="CHEBI:58289"/>
    </ligand>
</feature>
<feature type="binding site" evidence="1">
    <location>
        <position position="374"/>
    </location>
    <ligand>
        <name>(2R)-2-phosphoglycerate</name>
        <dbReference type="ChEBI" id="CHEBI:58289"/>
    </ligand>
</feature>
<feature type="binding site" evidence="1">
    <location>
        <position position="395"/>
    </location>
    <ligand>
        <name>(2R)-2-phosphoglycerate</name>
        <dbReference type="ChEBI" id="CHEBI:58289"/>
    </ligand>
</feature>
<proteinExistence type="inferred from homology"/>
<sequence length="435" mass="47095">MSIITDVYAREVLDSRGNPTLEVEVYTESGAFGRGMVPSGASTGEHEAVELRDGDKSRYLGLGTQKAVDNVNNVIADAIIGFDVRDQQAIDRAMIALDGTPNKGKLGANAILGVSIAVARAAADYLEVPLYTYLGGFNTKVLPTPMMNIINGGSHSDAPIAFQEFMILPVGAPSFKEGLRWGAEVFHALKKILKARGLVTAVGDEGGFAPKFEGTEDGVETIIEAIEAAGYEAGENGIMIGFDCASSEFYDKERKVYDYTKFEGEGAAVRTSAEQIDYLEELVNKYPIITIEDGMDENDWDGWKALTERLGKRVQLVGDDFFVTNTDYLARGIKEGAANSILIKVNQIGTLTETFEAIEMAKEAGYTAVVSHRSGETEDSTIADIAVATNAGQIKTGSLSRTDRIAKYNQLLRIEDQLGEVAVYKGLNSFYNLKK</sequence>
<organism>
    <name type="scientific">Streptococcus suis (strain 98HAH33)</name>
    <dbReference type="NCBI Taxonomy" id="391296"/>
    <lineage>
        <taxon>Bacteria</taxon>
        <taxon>Bacillati</taxon>
        <taxon>Bacillota</taxon>
        <taxon>Bacilli</taxon>
        <taxon>Lactobacillales</taxon>
        <taxon>Streptococcaceae</taxon>
        <taxon>Streptococcus</taxon>
    </lineage>
</organism>
<protein>
    <recommendedName>
        <fullName evidence="1">Enolase</fullName>
        <ecNumber evidence="1">4.2.1.11</ecNumber>
    </recommendedName>
    <alternativeName>
        <fullName evidence="1">2-phospho-D-glycerate hydro-lyase</fullName>
    </alternativeName>
    <alternativeName>
        <fullName evidence="1">2-phosphoglycerate dehydratase</fullName>
    </alternativeName>
</protein>
<comment type="function">
    <text evidence="1">Catalyzes the reversible conversion of 2-phosphoglycerate (2-PG) into phosphoenolpyruvate (PEP). It is essential for the degradation of carbohydrates via glycolysis.</text>
</comment>
<comment type="catalytic activity">
    <reaction evidence="1">
        <text>(2R)-2-phosphoglycerate = phosphoenolpyruvate + H2O</text>
        <dbReference type="Rhea" id="RHEA:10164"/>
        <dbReference type="ChEBI" id="CHEBI:15377"/>
        <dbReference type="ChEBI" id="CHEBI:58289"/>
        <dbReference type="ChEBI" id="CHEBI:58702"/>
        <dbReference type="EC" id="4.2.1.11"/>
    </reaction>
</comment>
<comment type="cofactor">
    <cofactor evidence="1">
        <name>Mg(2+)</name>
        <dbReference type="ChEBI" id="CHEBI:18420"/>
    </cofactor>
    <text evidence="1">Binds a second Mg(2+) ion via substrate during catalysis.</text>
</comment>
<comment type="pathway">
    <text evidence="1">Carbohydrate degradation; glycolysis; pyruvate from D-glyceraldehyde 3-phosphate: step 4/5.</text>
</comment>
<comment type="subcellular location">
    <subcellularLocation>
        <location evidence="1">Cytoplasm</location>
    </subcellularLocation>
    <subcellularLocation>
        <location evidence="1">Secreted</location>
    </subcellularLocation>
    <subcellularLocation>
        <location evidence="1">Cell surface</location>
    </subcellularLocation>
    <text evidence="1">Fractions of enolase are present in both the cytoplasm and on the cell surface.</text>
</comment>
<comment type="similarity">
    <text evidence="1">Belongs to the enolase family.</text>
</comment>
<dbReference type="EC" id="4.2.1.11" evidence="1"/>
<dbReference type="EMBL" id="CP000408">
    <property type="protein sequence ID" value="ABP92670.1"/>
    <property type="molecule type" value="Genomic_DNA"/>
</dbReference>
<dbReference type="SMR" id="A4W2T1"/>
<dbReference type="MoonProt" id="A4W2T1"/>
<dbReference type="KEGG" id="ssv:SSU98_1513"/>
<dbReference type="HOGENOM" id="CLU_031223_2_1_9"/>
<dbReference type="UniPathway" id="UPA00109">
    <property type="reaction ID" value="UER00187"/>
</dbReference>
<dbReference type="GO" id="GO:0009986">
    <property type="term" value="C:cell surface"/>
    <property type="evidence" value="ECO:0007669"/>
    <property type="project" value="UniProtKB-SubCell"/>
</dbReference>
<dbReference type="GO" id="GO:0005576">
    <property type="term" value="C:extracellular region"/>
    <property type="evidence" value="ECO:0007669"/>
    <property type="project" value="UniProtKB-SubCell"/>
</dbReference>
<dbReference type="GO" id="GO:0009274">
    <property type="term" value="C:peptidoglycan-based cell wall"/>
    <property type="evidence" value="ECO:0007669"/>
    <property type="project" value="UniProtKB-ARBA"/>
</dbReference>
<dbReference type="GO" id="GO:0000015">
    <property type="term" value="C:phosphopyruvate hydratase complex"/>
    <property type="evidence" value="ECO:0007669"/>
    <property type="project" value="InterPro"/>
</dbReference>
<dbReference type="GO" id="GO:0000287">
    <property type="term" value="F:magnesium ion binding"/>
    <property type="evidence" value="ECO:0007669"/>
    <property type="project" value="UniProtKB-UniRule"/>
</dbReference>
<dbReference type="GO" id="GO:0004634">
    <property type="term" value="F:phosphopyruvate hydratase activity"/>
    <property type="evidence" value="ECO:0007669"/>
    <property type="project" value="UniProtKB-UniRule"/>
</dbReference>
<dbReference type="GO" id="GO:0006096">
    <property type="term" value="P:glycolytic process"/>
    <property type="evidence" value="ECO:0007669"/>
    <property type="project" value="UniProtKB-UniRule"/>
</dbReference>
<dbReference type="CDD" id="cd03313">
    <property type="entry name" value="enolase"/>
    <property type="match status" value="1"/>
</dbReference>
<dbReference type="FunFam" id="3.20.20.120:FF:000001">
    <property type="entry name" value="Enolase"/>
    <property type="match status" value="1"/>
</dbReference>
<dbReference type="FunFam" id="3.30.390.10:FF:000001">
    <property type="entry name" value="Enolase"/>
    <property type="match status" value="1"/>
</dbReference>
<dbReference type="Gene3D" id="3.20.20.120">
    <property type="entry name" value="Enolase-like C-terminal domain"/>
    <property type="match status" value="1"/>
</dbReference>
<dbReference type="Gene3D" id="3.30.390.10">
    <property type="entry name" value="Enolase-like, N-terminal domain"/>
    <property type="match status" value="1"/>
</dbReference>
<dbReference type="HAMAP" id="MF_00318">
    <property type="entry name" value="Enolase"/>
    <property type="match status" value="1"/>
</dbReference>
<dbReference type="InterPro" id="IPR000941">
    <property type="entry name" value="Enolase"/>
</dbReference>
<dbReference type="InterPro" id="IPR036849">
    <property type="entry name" value="Enolase-like_C_sf"/>
</dbReference>
<dbReference type="InterPro" id="IPR029017">
    <property type="entry name" value="Enolase-like_N"/>
</dbReference>
<dbReference type="InterPro" id="IPR020810">
    <property type="entry name" value="Enolase_C"/>
</dbReference>
<dbReference type="InterPro" id="IPR020809">
    <property type="entry name" value="Enolase_CS"/>
</dbReference>
<dbReference type="InterPro" id="IPR020811">
    <property type="entry name" value="Enolase_N"/>
</dbReference>
<dbReference type="NCBIfam" id="TIGR01060">
    <property type="entry name" value="eno"/>
    <property type="match status" value="1"/>
</dbReference>
<dbReference type="PANTHER" id="PTHR11902">
    <property type="entry name" value="ENOLASE"/>
    <property type="match status" value="1"/>
</dbReference>
<dbReference type="PANTHER" id="PTHR11902:SF1">
    <property type="entry name" value="ENOLASE"/>
    <property type="match status" value="1"/>
</dbReference>
<dbReference type="Pfam" id="PF00113">
    <property type="entry name" value="Enolase_C"/>
    <property type="match status" value="1"/>
</dbReference>
<dbReference type="Pfam" id="PF03952">
    <property type="entry name" value="Enolase_N"/>
    <property type="match status" value="1"/>
</dbReference>
<dbReference type="PIRSF" id="PIRSF001400">
    <property type="entry name" value="Enolase"/>
    <property type="match status" value="1"/>
</dbReference>
<dbReference type="PRINTS" id="PR00148">
    <property type="entry name" value="ENOLASE"/>
</dbReference>
<dbReference type="SFLD" id="SFLDF00002">
    <property type="entry name" value="enolase"/>
    <property type="match status" value="1"/>
</dbReference>
<dbReference type="SFLD" id="SFLDG00178">
    <property type="entry name" value="enolase"/>
    <property type="match status" value="1"/>
</dbReference>
<dbReference type="SMART" id="SM01192">
    <property type="entry name" value="Enolase_C"/>
    <property type="match status" value="1"/>
</dbReference>
<dbReference type="SMART" id="SM01193">
    <property type="entry name" value="Enolase_N"/>
    <property type="match status" value="1"/>
</dbReference>
<dbReference type="SUPFAM" id="SSF51604">
    <property type="entry name" value="Enolase C-terminal domain-like"/>
    <property type="match status" value="1"/>
</dbReference>
<dbReference type="SUPFAM" id="SSF54826">
    <property type="entry name" value="Enolase N-terminal domain-like"/>
    <property type="match status" value="1"/>
</dbReference>
<dbReference type="PROSITE" id="PS00164">
    <property type="entry name" value="ENOLASE"/>
    <property type="match status" value="1"/>
</dbReference>
<keyword id="KW-0963">Cytoplasm</keyword>
<keyword id="KW-0324">Glycolysis</keyword>
<keyword id="KW-0456">Lyase</keyword>
<keyword id="KW-0460">Magnesium</keyword>
<keyword id="KW-0479">Metal-binding</keyword>
<keyword id="KW-0964">Secreted</keyword>